<accession>B5BJR7</accession>
<comment type="function">
    <text evidence="1">DNA repair enzyme involved in the repair of deaminated bases. Selectively cleaves double-stranded DNA at the second phosphodiester bond 3' to a deoxyinosine leaving behind the intact lesion on the nicked DNA.</text>
</comment>
<comment type="catalytic activity">
    <reaction evidence="1">
        <text>Endonucleolytic cleavage at apurinic or apyrimidinic sites to products with a 5'-phosphate.</text>
        <dbReference type="EC" id="3.1.21.7"/>
    </reaction>
</comment>
<comment type="cofactor">
    <cofactor evidence="1">
        <name>Mg(2+)</name>
        <dbReference type="ChEBI" id="CHEBI:18420"/>
    </cofactor>
</comment>
<comment type="subcellular location">
    <subcellularLocation>
        <location evidence="1">Cytoplasm</location>
    </subcellularLocation>
</comment>
<comment type="similarity">
    <text evidence="1">Belongs to the endonuclease V family.</text>
</comment>
<proteinExistence type="inferred from homology"/>
<reference key="1">
    <citation type="journal article" date="2009" name="BMC Genomics">
        <title>Pseudogene accumulation in the evolutionary histories of Salmonella enterica serovars Paratyphi A and Typhi.</title>
        <authorList>
            <person name="Holt K.E."/>
            <person name="Thomson N.R."/>
            <person name="Wain J."/>
            <person name="Langridge G.C."/>
            <person name="Hasan R."/>
            <person name="Bhutta Z.A."/>
            <person name="Quail M.A."/>
            <person name="Norbertczak H."/>
            <person name="Walker D."/>
            <person name="Simmonds M."/>
            <person name="White B."/>
            <person name="Bason N."/>
            <person name="Mungall K."/>
            <person name="Dougan G."/>
            <person name="Parkhill J."/>
        </authorList>
    </citation>
    <scope>NUCLEOTIDE SEQUENCE [LARGE SCALE GENOMIC DNA]</scope>
    <source>
        <strain>AKU_12601</strain>
    </source>
</reference>
<protein>
    <recommendedName>
        <fullName evidence="1">Endonuclease V</fullName>
        <ecNumber evidence="1">3.1.21.7</ecNumber>
    </recommendedName>
    <alternativeName>
        <fullName evidence="1">Deoxyinosine 3'endonuclease</fullName>
    </alternativeName>
    <alternativeName>
        <fullName evidence="1">Deoxyribonuclease V</fullName>
        <shortName evidence="1">DNase V</shortName>
    </alternativeName>
</protein>
<evidence type="ECO:0000255" key="1">
    <source>
        <dbReference type="HAMAP-Rule" id="MF_00801"/>
    </source>
</evidence>
<feature type="chain" id="PRO_1000133889" description="Endonuclease V">
    <location>
        <begin position="1"/>
        <end position="223"/>
    </location>
</feature>
<feature type="binding site" evidence="1">
    <location>
        <position position="35"/>
    </location>
    <ligand>
        <name>Mg(2+)</name>
        <dbReference type="ChEBI" id="CHEBI:18420"/>
    </ligand>
</feature>
<feature type="binding site" evidence="1">
    <location>
        <position position="103"/>
    </location>
    <ligand>
        <name>Mg(2+)</name>
        <dbReference type="ChEBI" id="CHEBI:18420"/>
    </ligand>
</feature>
<feature type="site" description="Interaction with target DNA" evidence="1">
    <location>
        <position position="73"/>
    </location>
</feature>
<name>NFI_SALPK</name>
<sequence>MDLASLRAQQIELASSVCREDRLDKDPPAFIGGADVGFEQGGEVTWAAMVLLKYPSLELVEYKVARIATTMPYIPGFLSFREYPALLAAWEQLSQKPDLLFVDGHGISHPRRLGVASHFGLLVDVPTIGVAKKRLCGKFEPLSTEPGALSPLMDKGEQLAWVWRSKARCNPLFIATGHRVSTDSALAWVQRCMKGYRLPEPTRWADAVASGRPAFVRWQEIQR</sequence>
<keyword id="KW-0963">Cytoplasm</keyword>
<keyword id="KW-0227">DNA damage</keyword>
<keyword id="KW-0234">DNA repair</keyword>
<keyword id="KW-0255">Endonuclease</keyword>
<keyword id="KW-0378">Hydrolase</keyword>
<keyword id="KW-0460">Magnesium</keyword>
<keyword id="KW-0479">Metal-binding</keyword>
<keyword id="KW-0540">Nuclease</keyword>
<dbReference type="EC" id="3.1.21.7" evidence="1"/>
<dbReference type="EMBL" id="FM200053">
    <property type="protein sequence ID" value="CAR62003.1"/>
    <property type="molecule type" value="Genomic_DNA"/>
</dbReference>
<dbReference type="RefSeq" id="WP_000362369.1">
    <property type="nucleotide sequence ID" value="NC_011147.1"/>
</dbReference>
<dbReference type="SMR" id="B5BJR7"/>
<dbReference type="KEGG" id="sek:SSPA3720"/>
<dbReference type="HOGENOM" id="CLU_047631_1_0_6"/>
<dbReference type="Proteomes" id="UP000001869">
    <property type="component" value="Chromosome"/>
</dbReference>
<dbReference type="GO" id="GO:0005737">
    <property type="term" value="C:cytoplasm"/>
    <property type="evidence" value="ECO:0007669"/>
    <property type="project" value="UniProtKB-SubCell"/>
</dbReference>
<dbReference type="GO" id="GO:0043737">
    <property type="term" value="F:deoxyribonuclease V activity"/>
    <property type="evidence" value="ECO:0007669"/>
    <property type="project" value="UniProtKB-UniRule"/>
</dbReference>
<dbReference type="GO" id="GO:0000287">
    <property type="term" value="F:magnesium ion binding"/>
    <property type="evidence" value="ECO:0007669"/>
    <property type="project" value="UniProtKB-UniRule"/>
</dbReference>
<dbReference type="GO" id="GO:0016891">
    <property type="term" value="F:RNA endonuclease activity, producing 5'-phosphomonoesters"/>
    <property type="evidence" value="ECO:0007669"/>
    <property type="project" value="TreeGrafter"/>
</dbReference>
<dbReference type="GO" id="GO:0003727">
    <property type="term" value="F:single-stranded RNA binding"/>
    <property type="evidence" value="ECO:0007669"/>
    <property type="project" value="TreeGrafter"/>
</dbReference>
<dbReference type="GO" id="GO:0006281">
    <property type="term" value="P:DNA repair"/>
    <property type="evidence" value="ECO:0007669"/>
    <property type="project" value="UniProtKB-UniRule"/>
</dbReference>
<dbReference type="CDD" id="cd06559">
    <property type="entry name" value="Endonuclease_V"/>
    <property type="match status" value="1"/>
</dbReference>
<dbReference type="FunFam" id="3.30.2170.10:FF:000001">
    <property type="entry name" value="Endonuclease V"/>
    <property type="match status" value="1"/>
</dbReference>
<dbReference type="Gene3D" id="3.30.2170.10">
    <property type="entry name" value="archaeoglobus fulgidus dsm 4304 superfamily"/>
    <property type="match status" value="1"/>
</dbReference>
<dbReference type="HAMAP" id="MF_00801">
    <property type="entry name" value="Endonuclease_5"/>
    <property type="match status" value="1"/>
</dbReference>
<dbReference type="InterPro" id="IPR007581">
    <property type="entry name" value="Endonuclease-V"/>
</dbReference>
<dbReference type="NCBIfam" id="NF008629">
    <property type="entry name" value="PRK11617.1"/>
    <property type="match status" value="1"/>
</dbReference>
<dbReference type="PANTHER" id="PTHR28511">
    <property type="entry name" value="ENDONUCLEASE V"/>
    <property type="match status" value="1"/>
</dbReference>
<dbReference type="PANTHER" id="PTHR28511:SF1">
    <property type="entry name" value="ENDONUCLEASE V"/>
    <property type="match status" value="1"/>
</dbReference>
<dbReference type="Pfam" id="PF04493">
    <property type="entry name" value="Endonuclease_5"/>
    <property type="match status" value="1"/>
</dbReference>
<organism>
    <name type="scientific">Salmonella paratyphi A (strain AKU_12601)</name>
    <dbReference type="NCBI Taxonomy" id="554290"/>
    <lineage>
        <taxon>Bacteria</taxon>
        <taxon>Pseudomonadati</taxon>
        <taxon>Pseudomonadota</taxon>
        <taxon>Gammaproteobacteria</taxon>
        <taxon>Enterobacterales</taxon>
        <taxon>Enterobacteriaceae</taxon>
        <taxon>Salmonella</taxon>
    </lineage>
</organism>
<gene>
    <name evidence="1" type="primary">nfi</name>
    <name type="ordered locus">SSPA3720</name>
</gene>